<accession>A1L314</accession>
<accession>A1L315</accession>
<accession>Q61889</accession>
<dbReference type="EMBL" id="BC129843">
    <property type="protein sequence ID" value="AAI29844.1"/>
    <property type="molecule type" value="mRNA"/>
</dbReference>
<dbReference type="EMBL" id="BC129844">
    <property type="protein sequence ID" value="AAI29845.1"/>
    <property type="molecule type" value="mRNA"/>
</dbReference>
<dbReference type="EMBL" id="L20315">
    <property type="protein sequence ID" value="AAA73957.1"/>
    <property type="status" value="ALT_FRAME"/>
    <property type="molecule type" value="mRNA"/>
</dbReference>
<dbReference type="PIR" id="I52603">
    <property type="entry name" value="I52603"/>
</dbReference>
<dbReference type="RefSeq" id="NP_034951.1">
    <property type="nucleotide sequence ID" value="NM_010821.1"/>
</dbReference>
<dbReference type="PDB" id="6SB1">
    <property type="method" value="X-ray"/>
    <property type="resolution" value="2.05 A"/>
    <property type="chains" value="A/B=349-631"/>
</dbReference>
<dbReference type="PDB" id="6SB3">
    <property type="method" value="EM"/>
    <property type="resolution" value="3.50 A"/>
    <property type="chains" value="A/B/C/D/E/F/G/H/I/J/K/L/M/N/O/P=20-652"/>
</dbReference>
<dbReference type="PDB" id="6SB4">
    <property type="method" value="X-ray"/>
    <property type="resolution" value="3.17 A"/>
    <property type="chains" value="A/B/C/D/E/F/G/H=349-631"/>
</dbReference>
<dbReference type="PDB" id="6SB5">
    <property type="method" value="EM"/>
    <property type="resolution" value="5.00 A"/>
    <property type="chains" value="A/B/C/D/E/F/G/H/I/J/K/L/M/N/O/P=20-652"/>
</dbReference>
<dbReference type="PDB" id="8A1D">
    <property type="method" value="EM"/>
    <property type="resolution" value="3.00 A"/>
    <property type="chains" value="A/B/C/D/E/F/G/H/I/J/K/L/M/N/O/P=20-652"/>
</dbReference>
<dbReference type="PDB" id="8A1S">
    <property type="method" value="EM"/>
    <property type="resolution" value="4.00 A"/>
    <property type="chains" value="A/B/C/D/E/F/G/H/I/J/K/L/M/N/O/P=20-652"/>
</dbReference>
<dbReference type="PDBsum" id="6SB1"/>
<dbReference type="PDBsum" id="6SB3"/>
<dbReference type="PDBsum" id="6SB4"/>
<dbReference type="PDBsum" id="6SB5"/>
<dbReference type="PDBsum" id="8A1D"/>
<dbReference type="PDBsum" id="8A1S"/>
<dbReference type="EMDB" id="EMD-10134"/>
<dbReference type="EMDB" id="EMD-10135"/>
<dbReference type="EMDB" id="EMD-15072"/>
<dbReference type="EMDB" id="EMD-15086"/>
<dbReference type="SMR" id="A1L314"/>
<dbReference type="BioGRID" id="201477">
    <property type="interactions" value="5"/>
</dbReference>
<dbReference type="FunCoup" id="A1L314">
    <property type="interactions" value="83"/>
</dbReference>
<dbReference type="STRING" id="10090.ENSMUSP00000108573"/>
<dbReference type="BindingDB" id="A1L314"/>
<dbReference type="ChEMBL" id="CHEMBL5465262"/>
<dbReference type="GlyCosmos" id="A1L314">
    <property type="glycosylation" value="3 sites, No reported glycans"/>
</dbReference>
<dbReference type="GlyGen" id="A1L314">
    <property type="glycosylation" value="3 sites, 2 N-linked glycans (2 sites)"/>
</dbReference>
<dbReference type="iPTMnet" id="A1L314"/>
<dbReference type="PhosphoSitePlus" id="A1L314"/>
<dbReference type="PaxDb" id="10090-ENSMUSP00000108573"/>
<dbReference type="PeptideAtlas" id="A1L314"/>
<dbReference type="ProteomicsDB" id="291486"/>
<dbReference type="GeneID" id="17476"/>
<dbReference type="KEGG" id="mmu:17476"/>
<dbReference type="AGR" id="MGI:1333743"/>
<dbReference type="CTD" id="219972"/>
<dbReference type="MGI" id="MGI:1333743">
    <property type="gene designation" value="Mpeg1"/>
</dbReference>
<dbReference type="eggNOG" id="ENOG502QRKR">
    <property type="taxonomic scope" value="Eukaryota"/>
</dbReference>
<dbReference type="InParanoid" id="A1L314"/>
<dbReference type="OrthoDB" id="5950457at2759"/>
<dbReference type="PhylomeDB" id="A1L314"/>
<dbReference type="BioGRID-ORCS" id="17476">
    <property type="hits" value="1 hit in 77 CRISPR screens"/>
</dbReference>
<dbReference type="ChiTaRS" id="Mpeg1">
    <property type="organism name" value="mouse"/>
</dbReference>
<dbReference type="PRO" id="PR:A1L314"/>
<dbReference type="Proteomes" id="UP000000589">
    <property type="component" value="Unplaced"/>
</dbReference>
<dbReference type="RNAct" id="A1L314">
    <property type="molecule type" value="protein"/>
</dbReference>
<dbReference type="GO" id="GO:0031410">
    <property type="term" value="C:cytoplasmic vesicle"/>
    <property type="evidence" value="ECO:0000314"/>
    <property type="project" value="UniProtKB"/>
</dbReference>
<dbReference type="GO" id="GO:0036019">
    <property type="term" value="C:endolysosome"/>
    <property type="evidence" value="ECO:0000314"/>
    <property type="project" value="UniProtKB"/>
</dbReference>
<dbReference type="GO" id="GO:0045335">
    <property type="term" value="C:phagocytic vesicle"/>
    <property type="evidence" value="ECO:0000314"/>
    <property type="project" value="UniProtKB"/>
</dbReference>
<dbReference type="GO" id="GO:0030670">
    <property type="term" value="C:phagocytic vesicle membrane"/>
    <property type="evidence" value="ECO:0000314"/>
    <property type="project" value="UniProtKB"/>
</dbReference>
<dbReference type="GO" id="GO:0061474">
    <property type="term" value="C:phagolysosome membrane"/>
    <property type="evidence" value="ECO:0000250"/>
    <property type="project" value="UniProtKB"/>
</dbReference>
<dbReference type="GO" id="GO:0140911">
    <property type="term" value="F:pore-forming activity"/>
    <property type="evidence" value="ECO:0000314"/>
    <property type="project" value="GO_Central"/>
</dbReference>
<dbReference type="GO" id="GO:0022829">
    <property type="term" value="F:wide pore channel activity"/>
    <property type="evidence" value="ECO:0000314"/>
    <property type="project" value="UniProtKB"/>
</dbReference>
<dbReference type="GO" id="GO:0002250">
    <property type="term" value="P:adaptive immune response"/>
    <property type="evidence" value="ECO:0007669"/>
    <property type="project" value="UniProtKB-KW"/>
</dbReference>
<dbReference type="GO" id="GO:0140367">
    <property type="term" value="P:antibacterial innate immune response"/>
    <property type="evidence" value="ECO:0000315"/>
    <property type="project" value="UniProtKB"/>
</dbReference>
<dbReference type="GO" id="GO:0002478">
    <property type="term" value="P:antigen processing and presentation of exogenous peptide antigen"/>
    <property type="evidence" value="ECO:0000314"/>
    <property type="project" value="UniProtKB"/>
</dbReference>
<dbReference type="GO" id="GO:0042590">
    <property type="term" value="P:antigen processing and presentation of exogenous peptide antigen via MHC class I"/>
    <property type="evidence" value="ECO:0000314"/>
    <property type="project" value="UniProtKB"/>
</dbReference>
<dbReference type="GO" id="GO:0042742">
    <property type="term" value="P:defense response to bacterium"/>
    <property type="evidence" value="ECO:0000315"/>
    <property type="project" value="UniProtKB"/>
</dbReference>
<dbReference type="GO" id="GO:0050829">
    <property type="term" value="P:defense response to Gram-negative bacterium"/>
    <property type="evidence" value="ECO:0000315"/>
    <property type="project" value="UniProtKB"/>
</dbReference>
<dbReference type="GO" id="GO:0050830">
    <property type="term" value="P:defense response to Gram-positive bacterium"/>
    <property type="evidence" value="ECO:0000315"/>
    <property type="project" value="UniProtKB"/>
</dbReference>
<dbReference type="GO" id="GO:0002468">
    <property type="term" value="P:dendritic cell antigen processing and presentation"/>
    <property type="evidence" value="ECO:0000314"/>
    <property type="project" value="UniProtKB"/>
</dbReference>
<dbReference type="CDD" id="cd22579">
    <property type="entry name" value="MPEG1_P2"/>
    <property type="match status" value="1"/>
</dbReference>
<dbReference type="InterPro" id="IPR020864">
    <property type="entry name" value="MACPF"/>
</dbReference>
<dbReference type="InterPro" id="IPR039707">
    <property type="entry name" value="MPEG1"/>
</dbReference>
<dbReference type="PANTHER" id="PTHR31463">
    <property type="entry name" value="MACROPHAGE-EXPRESSED GENE 1 PROTEIN"/>
    <property type="match status" value="1"/>
</dbReference>
<dbReference type="PANTHER" id="PTHR31463:SF1">
    <property type="entry name" value="MACROPHAGE-EXPRESSED GENE 1 PROTEIN"/>
    <property type="match status" value="1"/>
</dbReference>
<dbReference type="Pfam" id="PF01823">
    <property type="entry name" value="MACPF"/>
    <property type="match status" value="1"/>
</dbReference>
<dbReference type="SMART" id="SM00457">
    <property type="entry name" value="MACPF"/>
    <property type="match status" value="1"/>
</dbReference>
<dbReference type="PROSITE" id="PS51412">
    <property type="entry name" value="MACPF_2"/>
    <property type="match status" value="1"/>
</dbReference>
<gene>
    <name evidence="16 23" type="primary">Mpeg1</name>
</gene>
<sequence length="713" mass="78390">MNSFMALVLIWMIIACAEADKPLGETGTTGFQICKNALKLPVLEVLPGGGWDNLRNVDMGRVMDLTYTNCKTTEDGQYIIPDEVYTIPQKESNLEMNSEVLESWMNYQSTTSLSINTELALFSRVNGKFSTEFQRMKTLQVKDQAVTTRVQVRNRIYTVKTTPTSELSLGFTKALMDICDQLEKNQTKMATYLAELLILNYGTHVITSVDAGAALVQEDHVRSSFLLDNQNSQNTVTASAGIAFLNIVNFKVETDYISQTSLTKDYLSNRTNSRVQSFGGVPFYPGITLETWQKGITNHLVAIDRAGLPLHFFIKPDKLPGLPGPLVKKLSKTVETAVRHYYTFNTHPGCTNVDSPNFNFQANMDDDSCDAKVTNFTFGGVYQECTELSGDVLCQNLEQKNLLTGDFSCPPGYSPVHLLSQTHEEGYSRLECKKKCTLKIFCKTVCEDVFRVAKAEFRAYWCVAAGQVPDNSGLLFGGVFTDKTINPMTNAQSCPAGYIPLNLFESLKVCVSLDYELGFKFSVPFGGFFSCIMGNPLVNSDTAKDVRAPSLKKCPGGFSQHLAVISDGCQVSYCVKAGIFTGGSLLPVRLPPYTKPPLMSQVATNTVIVTNSETARSWIKDPQTNQWKLGEPLELRRAMTVIHGDSNGMSGGEAAGITLGVTIALGIVITLAIYGTRKYKKKEYQEIEEQESLVGSLATDATVLNGEEDPSPA</sequence>
<reference key="1">
    <citation type="journal article" date="2004" name="Genome Res.">
        <title>The status, quality, and expansion of the NIH full-length cDNA project: the Mammalian Gene Collection (MGC).</title>
        <authorList>
            <consortium name="The MGC Project Team"/>
        </authorList>
    </citation>
    <scope>NUCLEOTIDE SEQUENCE [LARGE SCALE MRNA]</scope>
</reference>
<reference key="2">
    <citation type="journal article" date="1995" name="Blood">
        <title>Isolation of a novel macrophage-specific gene by differential cDNA analysis.</title>
        <authorList>
            <person name="Spilsbury K."/>
            <person name="O'Mara M.-A."/>
            <person name="Wu W.M."/>
            <person name="Rowe P.B."/>
            <person name="Symonds G."/>
            <person name="Takayama Y."/>
        </authorList>
    </citation>
    <scope>NUCLEOTIDE SEQUENCE [MRNA] OF 2-713</scope>
    <scope>INDUCTION</scope>
    <source>
        <strain>ICR</strain>
    </source>
</reference>
<reference key="3">
    <citation type="journal article" date="2010" name="Cell">
        <title>A tissue-specific atlas of mouse protein phosphorylation and expression.</title>
        <authorList>
            <person name="Huttlin E.L."/>
            <person name="Jedrychowski M.P."/>
            <person name="Elias J.E."/>
            <person name="Goswami T."/>
            <person name="Rad R."/>
            <person name="Beausoleil S.A."/>
            <person name="Villen J."/>
            <person name="Haas W."/>
            <person name="Sowa M.E."/>
            <person name="Gygi S.P."/>
        </authorList>
    </citation>
    <scope>IDENTIFICATION BY MASS SPECTROMETRY [LARGE SCALE ANALYSIS]</scope>
    <source>
        <tissue>Spleen</tissue>
    </source>
</reference>
<reference key="4">
    <citation type="journal article" date="2013" name="Infect. Immun.">
        <title>Perforin-2 restricts growth of Chlamydia trachomatis in macrophages.</title>
        <authorList>
            <person name="Fields K.A."/>
            <person name="McCormack R."/>
            <person name="de Armas L.R."/>
            <person name="Podack E.R."/>
        </authorList>
    </citation>
    <scope>FUNCTION</scope>
</reference>
<reference key="5">
    <citation type="journal article" date="2013" name="J. Innate Immun.">
        <title>Inhibition of intracellular bacterial replication in fibroblasts is dependent on the perforin-like protein (perforin-2) encoded by macrophage-expressed gene 1.</title>
        <authorList>
            <person name="McCormack R."/>
            <person name="de Armas L.R."/>
            <person name="Shiratsuchi M."/>
            <person name="Ramos J.E."/>
            <person name="Podack E.R."/>
        </authorList>
    </citation>
    <scope>FUNCTION</scope>
    <scope>INDUCTION</scope>
</reference>
<reference key="6">
    <citation type="journal article" date="2015" name="Elife">
        <title>Enteric pathogens deploy cell cycle inhibiting factors to block the bactericidal activity of Perforin-2.</title>
        <authorList>
            <person name="McCormack R.M."/>
            <person name="Lyapichev K."/>
            <person name="Olsson M.L."/>
            <person name="Podack E.R."/>
            <person name="Munson G.P."/>
        </authorList>
    </citation>
    <scope>SUBCELLULAR LOCATION</scope>
    <scope>UBIQUITINATION</scope>
    <scope>MUTAGENESIS OF 678-LYS--LYS-681</scope>
</reference>
<reference key="7">
    <citation type="journal article" date="2015" name="Elife">
        <title>Perforin-2 is essential for intracellular defense of parenchymal cells and phagocytes against pathogenic bacteria.</title>
        <authorList>
            <person name="McCormack R.M."/>
            <person name="de Armas L.R."/>
            <person name="Shiratsuchi M."/>
            <person name="Fiorentino D.G."/>
            <person name="Olsson M.L."/>
            <person name="Lichtenheld M.G."/>
            <person name="Morales A."/>
            <person name="Lyapichev K."/>
            <person name="Gonzalez L.E."/>
            <person name="Strbo N."/>
            <person name="Sukumar N."/>
            <person name="Stojadinovic O."/>
            <person name="Plano G.V."/>
            <person name="Munson G.P."/>
            <person name="Tomic-Canic M."/>
            <person name="Kirsner R.S."/>
            <person name="Russell D.G."/>
            <person name="Podack E.R."/>
        </authorList>
    </citation>
    <scope>FUNCTION</scope>
    <scope>SUBCELLULAR LOCATION</scope>
    <scope>TISSUE SPECIFICITY</scope>
</reference>
<reference key="8">
    <citation type="journal article" date="2016" name="Infect. Immun.">
        <title>Perforin-2 protects host cells and mice by restricting the vacuole to cytosol transitioning of a bacterial pathogen.</title>
        <authorList>
            <person name="McCormack R."/>
            <person name="Bahnan W."/>
            <person name="Shrestha N."/>
            <person name="Boucher J."/>
            <person name="Barreto M."/>
            <person name="Barrera C.M."/>
            <person name="Dauer E.A."/>
            <person name="Freitag N.E."/>
            <person name="Khan W.N."/>
            <person name="Podack E.R."/>
            <person name="Schesser K."/>
        </authorList>
    </citation>
    <scope>FUNCTION</scope>
</reference>
<reference key="9">
    <citation type="journal article" date="2018" name="J. Immunol.">
        <title>Perforin-2 breaches the envelope of phagocytosed bacteria allowing antimicrobial effectors access to intracellular targets.</title>
        <authorList>
            <person name="Bai F."/>
            <person name="McCormack R.M."/>
            <person name="Hower S."/>
            <person name="Plano G.V."/>
            <person name="Lichtenheld M.G."/>
            <person name="Munson G.P."/>
        </authorList>
    </citation>
    <scope>FUNCTION</scope>
</reference>
<reference key="10">
    <citation type="journal article" date="2022" name="Immunol. Cell Biol.">
        <title>Mpeg1 is not essential for antibacterial or antiviral immunity, but is implicated in antigen presentation.</title>
        <authorList>
            <person name="Ebrahimnezhaddarzi S."/>
            <person name="Bird C.H."/>
            <person name="Allison C.C."/>
            <person name="Tuipulotu D.E."/>
            <person name="Kostoulias X."/>
            <person name="Macri C."/>
            <person name="Stutz M.D."/>
            <person name="Abraham G."/>
            <person name="Kaiserman D."/>
            <person name="Pang S.S."/>
            <person name="Man S.M."/>
            <person name="Mintern J.D."/>
            <person name="Naderer T."/>
            <person name="Peleg A.Y."/>
            <person name="Pellegrini M."/>
            <person name="Whisstock J.C."/>
            <person name="Bird P.I."/>
        </authorList>
    </citation>
    <scope>FUNCTION</scope>
    <scope>SUBCELLULAR LOCATION</scope>
    <scope>TISSUE SPECIFICITY</scope>
</reference>
<reference key="11">
    <citation type="journal article" date="2022" name="Nat. Commun.">
        <title>Perforin-2 clockwise hand-over-hand pre-pore to pore transition mechanism.</title>
        <authorList>
            <person name="Jiao F."/>
            <person name="Dehez F."/>
            <person name="Ni T."/>
            <person name="Yu X."/>
            <person name="Dittman J.S."/>
            <person name="Gilbert R."/>
            <person name="Chipot C."/>
            <person name="Scheuring S."/>
        </authorList>
    </citation>
    <scope>FUNCTION</scope>
    <scope>ACTIVITY REGULATION</scope>
    <scope>SUBUNIT</scope>
</reference>
<reference key="12">
    <citation type="journal article" date="2023" name="Science">
        <title>Perforin-2 is a pore-forming effector of endocytic escape in cross-presenting dendritic cells.</title>
        <authorList>
            <person name="Rodriguez-Silvestre P."/>
            <person name="Laub M."/>
            <person name="Krawczyk P.A."/>
            <person name="Davies A.K."/>
            <person name="Schessner J.P."/>
            <person name="Parveen R."/>
            <person name="Tuck B.J."/>
            <person name="McEwan W.A."/>
            <person name="Borner G.H.H."/>
            <person name="Kozik P."/>
        </authorList>
    </citation>
    <scope>FUNCTION</scope>
    <scope>SUBCELLULAR LOCATION</scope>
    <scope>PROTEOLYTIC CLEAVAGE</scope>
    <scope>DISRUPTION PHENOTYPE</scope>
</reference>
<reference evidence="24 25 26 27" key="13">
    <citation type="journal article" date="2020" name="Sci. Adv.">
        <title>Structure and mechanism of bactericidal mammalian perforin-2, an ancient agent of innate immunity.</title>
        <authorList>
            <person name="Ni T."/>
            <person name="Jiao F."/>
            <person name="Yu X."/>
            <person name="Aden S."/>
            <person name="Ginger L."/>
            <person name="Williams S.I."/>
            <person name="Bai F."/>
            <person name="Prazak V."/>
            <person name="Karia D."/>
            <person name="Stansfeld P."/>
            <person name="Zhang P."/>
            <person name="Munson G."/>
            <person name="Anderluh G."/>
            <person name="Scheuring S."/>
            <person name="Gilbert R.J.C."/>
        </authorList>
    </citation>
    <scope>X-RAY CRYSTALLOGRAPHY (2.05 ANGSTROMS) OF 349-631</scope>
    <scope>FUNCTION</scope>
    <scope>ACTIVITY REGULATION</scope>
    <scope>SUBUNIT</scope>
    <scope>DOMAIN</scope>
    <scope>DISULFIDE BOND</scope>
    <scope>GLYCOSYLATION AT ASN-185 AND ASN-269</scope>
    <scope>MUTAGENESIS OF 427-TYR--VAL-452</scope>
</reference>
<reference evidence="28 29" key="14">
    <citation type="journal article" date="2022" name="EMBO J.">
        <title>Cryo-EM structures of perforin-2 in isolation and assembled on a membrane suggest a mechanism for pore formation.</title>
        <authorList>
            <person name="Yu X."/>
            <person name="Ni T."/>
            <person name="Munson G."/>
            <person name="Zhang P."/>
            <person name="Gilbert R.J.C."/>
        </authorList>
    </citation>
    <scope>STRUCTURE BY ELECTRON MICROSCOPY (3.00 ANGSTROMS) OF 20-652</scope>
    <scope>FUNCTION</scope>
    <scope>ACTIVITY REGULATION</scope>
    <scope>SUBUNIT</scope>
    <scope>DOMAIN</scope>
    <scope>DISULFIDE BOND</scope>
    <scope>GLYCOSYLATION AT ASN-269</scope>
</reference>
<name>MPEG1_MOUSE</name>
<evidence type="ECO:0000250" key="1">
    <source>
        <dbReference type="UniProtKB" id="Q2M385"/>
    </source>
</evidence>
<evidence type="ECO:0000255" key="2"/>
<evidence type="ECO:0000255" key="3">
    <source>
        <dbReference type="PROSITE-ProRule" id="PRU00745"/>
    </source>
</evidence>
<evidence type="ECO:0000269" key="4">
    <source>
    </source>
</evidence>
<evidence type="ECO:0000269" key="5">
    <source>
    </source>
</evidence>
<evidence type="ECO:0000269" key="6">
    <source>
    </source>
</evidence>
<evidence type="ECO:0000269" key="7">
    <source>
    </source>
</evidence>
<evidence type="ECO:0000269" key="8">
    <source>
    </source>
</evidence>
<evidence type="ECO:0000269" key="9">
    <source>
    </source>
</evidence>
<evidence type="ECO:0000269" key="10">
    <source>
    </source>
</evidence>
<evidence type="ECO:0000269" key="11">
    <source>
    </source>
</evidence>
<evidence type="ECO:0000269" key="12">
    <source>
    </source>
</evidence>
<evidence type="ECO:0000269" key="13">
    <source>
    </source>
</evidence>
<evidence type="ECO:0000269" key="14">
    <source>
    </source>
</evidence>
<evidence type="ECO:0000269" key="15">
    <source>
    </source>
</evidence>
<evidence type="ECO:0000303" key="16">
    <source>
    </source>
</evidence>
<evidence type="ECO:0000303" key="17">
    <source>
    </source>
</evidence>
<evidence type="ECO:0000303" key="18">
    <source>
    </source>
</evidence>
<evidence type="ECO:0000303" key="19">
    <source>
    </source>
</evidence>
<evidence type="ECO:0000305" key="20"/>
<evidence type="ECO:0000305" key="21">
    <source>
    </source>
</evidence>
<evidence type="ECO:0000305" key="22">
    <source>
    </source>
</evidence>
<evidence type="ECO:0000312" key="23">
    <source>
        <dbReference type="MGI" id="MGI:1333743"/>
    </source>
</evidence>
<evidence type="ECO:0007744" key="24">
    <source>
        <dbReference type="PDB" id="6SB1"/>
    </source>
</evidence>
<evidence type="ECO:0007744" key="25">
    <source>
        <dbReference type="PDB" id="6SB3"/>
    </source>
</evidence>
<evidence type="ECO:0007744" key="26">
    <source>
        <dbReference type="PDB" id="6SB4"/>
    </source>
</evidence>
<evidence type="ECO:0007744" key="27">
    <source>
        <dbReference type="PDB" id="6SB5"/>
    </source>
</evidence>
<evidence type="ECO:0007744" key="28">
    <source>
        <dbReference type="PDB" id="8A1D"/>
    </source>
</evidence>
<evidence type="ECO:0007744" key="29">
    <source>
        <dbReference type="PDB" id="8A1S"/>
    </source>
</evidence>
<evidence type="ECO:0007829" key="30">
    <source>
        <dbReference type="PDB" id="6SB1"/>
    </source>
</evidence>
<evidence type="ECO:0007829" key="31">
    <source>
        <dbReference type="PDB" id="6SB3"/>
    </source>
</evidence>
<proteinExistence type="evidence at protein level"/>
<protein>
    <recommendedName>
        <fullName evidence="16">Macrophage-expressed gene 1 protein</fullName>
        <shortName evidence="19">Macrophage gene 1 protein</shortName>
        <shortName evidence="19">Mpg-1</shortName>
    </recommendedName>
    <alternativeName>
        <fullName evidence="16">Perforin-2</fullName>
        <shortName evidence="1">P-2</shortName>
        <shortName evidence="17">PFN2</shortName>
        <shortName evidence="18">mPFN2</shortName>
    </alternativeName>
    <alternativeName>
        <fullName>Protein MPS1</fullName>
    </alternativeName>
    <component>
        <recommendedName>
            <fullName evidence="20">Macrophage-expressed gene 1 protein, processed form</fullName>
        </recommendedName>
    </component>
</protein>
<keyword id="KW-0002">3D-structure</keyword>
<keyword id="KW-1064">Adaptive immunity</keyword>
<keyword id="KW-0968">Cytoplasmic vesicle</keyword>
<keyword id="KW-1015">Disulfide bond</keyword>
<keyword id="KW-0325">Glycoprotein</keyword>
<keyword id="KW-0391">Immunity</keyword>
<keyword id="KW-0399">Innate immunity</keyword>
<keyword id="KW-0472">Membrane</keyword>
<keyword id="KW-1185">Reference proteome</keyword>
<keyword id="KW-0732">Signal</keyword>
<keyword id="KW-0812">Transmembrane</keyword>
<keyword id="KW-1134">Transmembrane beta strand</keyword>
<keyword id="KW-1133">Transmembrane helix</keyword>
<keyword id="KW-0832">Ubl conjugation</keyword>
<organism>
    <name type="scientific">Mus musculus</name>
    <name type="common">Mouse</name>
    <dbReference type="NCBI Taxonomy" id="10090"/>
    <lineage>
        <taxon>Eukaryota</taxon>
        <taxon>Metazoa</taxon>
        <taxon>Chordata</taxon>
        <taxon>Craniata</taxon>
        <taxon>Vertebrata</taxon>
        <taxon>Euteleostomi</taxon>
        <taxon>Mammalia</taxon>
        <taxon>Eutheria</taxon>
        <taxon>Euarchontoglires</taxon>
        <taxon>Glires</taxon>
        <taxon>Rodentia</taxon>
        <taxon>Myomorpha</taxon>
        <taxon>Muroidea</taxon>
        <taxon>Muridae</taxon>
        <taxon>Murinae</taxon>
        <taxon>Mus</taxon>
        <taxon>Mus</taxon>
    </lineage>
</organism>
<feature type="signal peptide" evidence="2">
    <location>
        <begin position="1"/>
        <end position="19"/>
    </location>
</feature>
<feature type="chain" id="PRO_5000142312" description="Macrophage-expressed gene 1 protein">
    <location>
        <begin position="20"/>
        <end position="713"/>
    </location>
</feature>
<feature type="chain" id="PRO_0000459023" description="Macrophage-expressed gene 1 protein, processed form" evidence="22">
    <location>
        <begin position="353"/>
        <end position="629"/>
    </location>
</feature>
<feature type="transmembrane region" description="Beta stranded; Name=TMH1" evidence="13 28 29">
    <location>
        <begin position="113"/>
        <end position="120"/>
    </location>
</feature>
<feature type="transmembrane region" description="Beta stranded; Name=TMH1" evidence="13 28 29">
    <location>
        <begin position="127"/>
        <end position="132"/>
    </location>
</feature>
<feature type="transmembrane region" description="Beta stranded; Name=TMH2" evidence="13 28 29">
    <location>
        <begin position="235"/>
        <end position="244"/>
    </location>
</feature>
<feature type="transmembrane region" description="Beta stranded; Name=TMH2" evidence="13 28 29">
    <location>
        <begin position="248"/>
        <end position="256"/>
    </location>
</feature>
<feature type="transmembrane region" description="Helical" evidence="2">
    <location>
        <begin position="654"/>
        <end position="674"/>
    </location>
</feature>
<feature type="domain" description="MACPF" evidence="3">
    <location>
        <begin position="30"/>
        <end position="345"/>
    </location>
</feature>
<feature type="region of interest" description="P2" evidence="10">
    <location>
        <begin position="410"/>
        <end position="653"/>
    </location>
</feature>
<feature type="site" description="Cleavage; by LGMN" evidence="14">
    <location>
        <begin position="352"/>
        <end position="353"/>
    </location>
</feature>
<feature type="site" description="Cleavage; by LGMN" evidence="14">
    <location>
        <begin position="357"/>
        <end position="358"/>
    </location>
</feature>
<feature type="site" description="Cleavage; by LGMN" evidence="14">
    <location>
        <begin position="359"/>
        <end position="360"/>
    </location>
</feature>
<feature type="site" description="Cleavage; by trypsin" evidence="21 22">
    <location>
        <begin position="628"/>
        <end position="629"/>
    </location>
</feature>
<feature type="glycosylation site" description="N-linked (GlcNAc...) asparagine" evidence="10 24 25">
    <location>
        <position position="185"/>
    </location>
</feature>
<feature type="glycosylation site" description="N-linked (GlcNAc...) asparagine" evidence="10 13 24 25 28 29">
    <location>
        <position position="269"/>
    </location>
</feature>
<feature type="glycosylation site" description="N-linked (GlcNAc...) asparagine" evidence="2">
    <location>
        <position position="375"/>
    </location>
</feature>
<feature type="disulfide bond" evidence="10 13 24 25 27 28 29">
    <location>
        <begin position="34"/>
        <end position="70"/>
    </location>
</feature>
<feature type="disulfide bond" evidence="10 13 25 26 28 29">
    <location>
        <begin position="350"/>
        <end position="369"/>
    </location>
</feature>
<feature type="disulfide bond" evidence="10 13 25 26 28 29">
    <location>
        <begin position="385"/>
        <end position="394"/>
    </location>
</feature>
<feature type="disulfide bond" evidence="10 13 25 26 28 29">
    <location>
        <begin position="432"/>
        <end position="446"/>
    </location>
</feature>
<feature type="disulfide bond" evidence="10 13 25 26 28 29">
    <location>
        <begin position="436"/>
        <end position="442"/>
    </location>
</feature>
<feature type="disulfide bond" evidence="10 13 25 26 28 29">
    <location>
        <begin position="531"/>
        <end position="569"/>
    </location>
</feature>
<feature type="disulfide bond" evidence="10 13 25 26 28 29">
    <location>
        <begin position="554"/>
        <end position="574"/>
    </location>
</feature>
<feature type="mutagenesis site" description="Abolished binding to target membranes." evidence="10">
    <location>
        <begin position="427"/>
        <end position="452"/>
    </location>
</feature>
<feature type="mutagenesis site" description="Abolishes ubiquitination and antibacterial activity and results in diffuse perinuclear distribution." evidence="7">
    <original>KYKK</original>
    <variation>QYQQ</variation>
    <location>
        <begin position="678"/>
        <end position="681"/>
    </location>
</feature>
<feature type="sequence conflict" description="In Ref. 1; AAI29845." evidence="20" ref="1">
    <original>S</original>
    <variation>T</variation>
    <location>
        <position position="414"/>
    </location>
</feature>
<feature type="helix" evidence="31">
    <location>
        <begin position="32"/>
        <end position="37"/>
    </location>
</feature>
<feature type="strand" evidence="31">
    <location>
        <begin position="49"/>
        <end position="51"/>
    </location>
</feature>
<feature type="turn" evidence="31">
    <location>
        <begin position="53"/>
        <end position="55"/>
    </location>
</feature>
<feature type="strand" evidence="31">
    <location>
        <begin position="84"/>
        <end position="97"/>
    </location>
</feature>
<feature type="strand" evidence="31">
    <location>
        <begin position="99"/>
        <end position="103"/>
    </location>
</feature>
<feature type="turn" evidence="31">
    <location>
        <begin position="104"/>
        <end position="106"/>
    </location>
</feature>
<feature type="turn" evidence="31">
    <location>
        <begin position="113"/>
        <end position="117"/>
    </location>
</feature>
<feature type="helix" evidence="31">
    <location>
        <begin position="131"/>
        <end position="140"/>
    </location>
</feature>
<feature type="turn" evidence="31">
    <location>
        <begin position="141"/>
        <end position="144"/>
    </location>
</feature>
<feature type="strand" evidence="31">
    <location>
        <begin position="145"/>
        <end position="149"/>
    </location>
</feature>
<feature type="strand" evidence="31">
    <location>
        <begin position="154"/>
        <end position="161"/>
    </location>
</feature>
<feature type="helix" evidence="31">
    <location>
        <begin position="169"/>
        <end position="183"/>
    </location>
</feature>
<feature type="helix" evidence="31">
    <location>
        <begin position="187"/>
        <end position="201"/>
    </location>
</feature>
<feature type="strand" evidence="31">
    <location>
        <begin position="202"/>
        <end position="212"/>
    </location>
</feature>
<feature type="strand" evidence="31">
    <location>
        <begin position="216"/>
        <end position="222"/>
    </location>
</feature>
<feature type="helix" evidence="31">
    <location>
        <begin position="223"/>
        <end position="228"/>
    </location>
</feature>
<feature type="helix" evidence="31">
    <location>
        <begin position="233"/>
        <end position="250"/>
    </location>
</feature>
<feature type="helix" evidence="31">
    <location>
        <begin position="261"/>
        <end position="268"/>
    </location>
</feature>
<feature type="strand" evidence="31">
    <location>
        <begin position="274"/>
        <end position="277"/>
    </location>
</feature>
<feature type="strand" evidence="31">
    <location>
        <begin position="279"/>
        <end position="281"/>
    </location>
</feature>
<feature type="helix" evidence="31">
    <location>
        <begin position="289"/>
        <end position="293"/>
    </location>
</feature>
<feature type="turn" evidence="31">
    <location>
        <begin position="294"/>
        <end position="297"/>
    </location>
</feature>
<feature type="strand" evidence="31">
    <location>
        <begin position="301"/>
        <end position="304"/>
    </location>
</feature>
<feature type="strand" evidence="31">
    <location>
        <begin position="306"/>
        <end position="309"/>
    </location>
</feature>
<feature type="helix" evidence="31">
    <location>
        <begin position="310"/>
        <end position="313"/>
    </location>
</feature>
<feature type="turn" evidence="31">
    <location>
        <begin position="316"/>
        <end position="318"/>
    </location>
</feature>
<feature type="strand" evidence="31">
    <location>
        <begin position="320"/>
        <end position="322"/>
    </location>
</feature>
<feature type="helix" evidence="31">
    <location>
        <begin position="324"/>
        <end position="345"/>
    </location>
</feature>
<feature type="strand" evidence="31">
    <location>
        <begin position="353"/>
        <end position="355"/>
    </location>
</feature>
<feature type="strand" evidence="31">
    <location>
        <begin position="369"/>
        <end position="371"/>
    </location>
</feature>
<feature type="strand" evidence="30">
    <location>
        <begin position="378"/>
        <end position="393"/>
    </location>
</feature>
<feature type="helix" evidence="30">
    <location>
        <begin position="394"/>
        <end position="397"/>
    </location>
</feature>
<feature type="turn" evidence="30">
    <location>
        <begin position="402"/>
        <end position="404"/>
    </location>
</feature>
<feature type="strand" evidence="30">
    <location>
        <begin position="405"/>
        <end position="408"/>
    </location>
</feature>
<feature type="strand" evidence="30">
    <location>
        <begin position="413"/>
        <end position="437"/>
    </location>
</feature>
<feature type="turn" evidence="30">
    <location>
        <begin position="438"/>
        <end position="440"/>
    </location>
</feature>
<feature type="strand" evidence="30">
    <location>
        <begin position="441"/>
        <end position="467"/>
    </location>
</feature>
<feature type="turn" evidence="31">
    <location>
        <begin position="470"/>
        <end position="472"/>
    </location>
</feature>
<feature type="strand" evidence="30">
    <location>
        <begin position="475"/>
        <end position="480"/>
    </location>
</feature>
<feature type="strand" evidence="30">
    <location>
        <begin position="482"/>
        <end position="484"/>
    </location>
</feature>
<feature type="turn" evidence="30">
    <location>
        <begin position="487"/>
        <end position="489"/>
    </location>
</feature>
<feature type="strand" evidence="30">
    <location>
        <begin position="490"/>
        <end position="493"/>
    </location>
</feature>
<feature type="strand" evidence="30">
    <location>
        <begin position="499"/>
        <end position="503"/>
    </location>
</feature>
<feature type="turn" evidence="30">
    <location>
        <begin position="504"/>
        <end position="506"/>
    </location>
</feature>
<feature type="strand" evidence="30">
    <location>
        <begin position="507"/>
        <end position="512"/>
    </location>
</feature>
<feature type="helix" evidence="30">
    <location>
        <begin position="515"/>
        <end position="518"/>
    </location>
</feature>
<feature type="helix" evidence="30">
    <location>
        <begin position="519"/>
        <end position="521"/>
    </location>
</feature>
<feature type="strand" evidence="30">
    <location>
        <begin position="525"/>
        <end position="530"/>
    </location>
</feature>
<feature type="strand" evidence="30">
    <location>
        <begin position="551"/>
        <end position="553"/>
    </location>
</feature>
<feature type="strand" evidence="30">
    <location>
        <begin position="558"/>
        <end position="566"/>
    </location>
</feature>
<feature type="strand" evidence="30">
    <location>
        <begin position="569"/>
        <end position="577"/>
    </location>
</feature>
<feature type="strand" evidence="31">
    <location>
        <begin position="582"/>
        <end position="584"/>
    </location>
</feature>
<feature type="strand" evidence="31">
    <location>
        <begin position="593"/>
        <end position="595"/>
    </location>
</feature>
<feature type="strand" evidence="31">
    <location>
        <begin position="608"/>
        <end position="615"/>
    </location>
</feature>
<feature type="strand" evidence="31">
    <location>
        <begin position="617"/>
        <end position="620"/>
    </location>
</feature>
<feature type="strand" evidence="31">
    <location>
        <begin position="622"/>
        <end position="625"/>
    </location>
</feature>
<feature type="helix" evidence="31">
    <location>
        <begin position="631"/>
        <end position="641"/>
    </location>
</feature>
<comment type="function">
    <text evidence="4 5 6 8 9 10 11 12 13 14">Pore-forming protein involved in both innate and adaptive immunity (PubMed:26402460, PubMed:30249808, PubMed:32064340, PubMed:36028507, PubMed:36245269, PubMed:37347855). Plays a central role in antigen cross-presentation in dendritic cells by forming a pore in antigen-containing compartments, thereby promoting delivery of antigens for cross-presentation (PubMed:35471730, PubMed:37347855). Also involved in innate immune response following bacterial infection; shows antibacterial activity against a wide spectrum of Gram-positive, Gram-negative and acid-fast bacteria (PubMed:23257510, PubMed:23753625, PubMed:26402460). Reduces the viability of the intracytosolic pathogen L.monocytogenes by inhibiting acidification of the phagocytic vacuole of host cells which restricts bacterial translocation from the vacuole to the cytosol (PubMed:26831467). Required for the antibacterial activity of reactive oxygen species and nitric oxide (PubMed:26402460).</text>
</comment>
<comment type="function">
    <molecule>Macrophage-expressed gene 1 protein, processed form</molecule>
    <text evidence="14">Pore-forming protein that plays a central role in antigen cross-presentation in dendritic cells by mediating delivery of antigens for cross-presentation (PubMed:37347855). Dendritic cells bridge innate and adaptive immunity by capturing exogenous antigens on MHC class-I molecules and presenting them to naive CD8(+) T-cells (PubMed:37347855). Acts by forming a pore in antigen-containing compartments, promoting the release of antigens into the cytosol, enabling generation of MHCI:peptide complexes and T-cell priming (PubMed:37347855).</text>
</comment>
<comment type="activity regulation">
    <text evidence="10 12 13">Forms arc- and ring-shaped pre-pores on top of the membrane at neutral to slightly acidic pH conditions and converts to pores upon acidification (PubMed:32064340, PubMed:36028507, PubMed:36245269). Undergoes transition from the pre-pore to the pore in a processive clockwise hand-over-hand process (PubMed:32064340, PubMed:36028507, PubMed:36245269). In the pore state, 2 alpha-helical regions refold into transmembrane hairpins (TMH1 and TMH2) in each protomer that form in the ensemble complex giant beta-barrel transmembrane pores (PubMed:32064340, PubMed:36028507, PubMed:36245269).</text>
</comment>
<comment type="subunit">
    <text evidence="10 12 13">Homooligomer; predominantly forms a homooligomeric arc-shaped pore complex instead of complete rings of 16 subunits.</text>
</comment>
<comment type="subcellular location">
    <subcellularLocation>
        <location evidence="6 7 11">Cytoplasmic vesicle membrane</location>
        <topology evidence="10 13">Multi-pass membrane protein</topology>
    </subcellularLocation>
    <text evidence="6">Bacterial infection induces translocation of the cytoplasmic vesicles to bacterium-containing phagocytic vesicles and fusing of the vesicles.</text>
</comment>
<comment type="subcellular location">
    <molecule>Macrophage-expressed gene 1 protein, processed form</molecule>
    <subcellularLocation>
        <location evidence="14">Cytoplasmic vesicle</location>
        <location evidence="14">Phagosome membrane</location>
        <topology evidence="10 13">Multi-pass membrane protein</topology>
    </subcellularLocation>
    <text evidence="14">Proteolytically processed in lysosomes, leading to its maturation and forms pores in the membrane of antigen-containing phagosomes.</text>
</comment>
<comment type="tissue specificity">
    <text evidence="6 11">Expressed constitutively in a variety of cell types including macrophages, microglia, neutrophils, T cells, marginal zone B cells, keratinocytes, splenocytes and intestinal epithelial cells.</text>
</comment>
<comment type="induction">
    <text evidence="4 15">By CSF1 in fetal liver macrophages (PubMed:7888681). By interferon-alpha, by interferon-beta, by interferon-gamma and by bacterial infection with E.coli and M.smegmatis in embryonic fibroblasts (PubMed:23257510).</text>
</comment>
<comment type="domain">
    <text evidence="10 13">The MACPF domain includes the central machinery of pore formation: acidification causes a significant structural rearrangement, leading to oligomerization and deployment of the transmembrane beta-strands (named TMH1 and TMH2) that enter the membrane as amphipathic beta-hairpins.</text>
</comment>
<comment type="domain">
    <text evidence="10 13">The P2 region contains beta-hairpins to interact with target membranes.</text>
</comment>
<comment type="PTM">
    <text evidence="14">Proteolytically processed in two steps to generate the Macrophage-expressed gene 1 protein, processed form: cleaved by trypsin in proximity of the helical transmembrane domain releases the ectodomain into the lysosomal lumen to orient the pore-forming domain toward the endogenous membranes, and processed by the asparagine endopeptidase (LGMN) (PubMed:37347855). Proteolytic processing in antigen-containing vesicles is pH-dependent (PubMed:37347855).</text>
</comment>
<comment type="PTM">
    <text evidence="7">Monoubiquitinated in response to bacterial infection; ubiquitination is required for vesicular localization and antibacterial activity and can be blocked by bacterial cell cycle inhibiting factor (cif) (PubMed:26418746).</text>
</comment>
<comment type="disruption phenotype">
    <text evidence="14">Impaired immunity characterized by a failure to efficiently prime CD8(+) T-cells to cell-associated antigens (PubMed:37347855). Defects are caused by impaired cross-presentation of cell-associated antigens (PubMed:37347855). In normal conditions, mice do not show any obvious disease phenotype or a change in immune cell frequencies (PubMed:37347855).</text>
</comment>
<comment type="similarity">
    <text evidence="20">Belongs to the MPEG1 family.</text>
</comment>
<comment type="caution">
    <text evidence="9 11">Was initially thought to facilitate killing of intravacuolar bacteria by inserting into the bacterial surface to form pores, thereby breaching the surface of phagocytosed bacteria (PubMed:30249808). These results were however not replicated in a later study (PubMed:35471730).</text>
</comment>
<comment type="sequence caution" evidence="20">
    <conflict type="frameshift">
        <sequence resource="EMBL-CDS" id="AAA73957"/>
    </conflict>
</comment>